<protein>
    <recommendedName>
        <fullName evidence="5">ANK repeat-containing protein nipk-1</fullName>
    </recommendedName>
</protein>
<evidence type="ECO:0000255" key="1"/>
<evidence type="ECO:0000256" key="2">
    <source>
        <dbReference type="SAM" id="MobiDB-lite"/>
    </source>
</evidence>
<evidence type="ECO:0000269" key="3">
    <source>
    </source>
</evidence>
<evidence type="ECO:0000303" key="4">
    <source>
    </source>
</evidence>
<evidence type="ECO:0000305" key="5"/>
<evidence type="ECO:0000312" key="6">
    <source>
        <dbReference type="Proteomes" id="UP000001940"/>
    </source>
</evidence>
<evidence type="ECO:0000312" key="7">
    <source>
        <dbReference type="WormBase" id="C33A11.1"/>
    </source>
</evidence>
<sequence>MATVAPKGNCLVARAIPSDSHADQLTDLLCKLSVNGDANQKSVNKFESQHGVTPSDFRDIQNIRSSALAKKTKTSKFQLDGVTLFADLTPNSKSKKKTENQETKEKDEEAEEKKDGPPKDDKELKMKKEKEQEDENAELDEQKKDGDLLGRGPVHNVRVATGGSHPYHRAQIPYGCAAQTPITDISAYTGYGSGYECGSTWSLSPDTTIGSISASTTPDTVLSSDGYGSASPPQHSPKESLQSPFSDISSADTSRVLTPENNELPESLQDFILQYSNQYTKEESIRGRPPSADSGVSSPMSARSAPYASPHVPQGTCSGPTTPSFNQTRLSPRTSENGITAKQRLNAIIPESDLATGFHWACTTWKNVLTNRDADGDTPLHIVAAHNDLGKIYALCETLRKTMNENDDNVFNVSNNFGETPLYVAVLQRSIEVVEYLLELGASPNSRSSRAVGDSPLHFATARGMNNMVEALLSKREIRVNETNDDGQTSLLCAVKMHGMMDEQTQHKIDNKSIIEMLIKAGADPTIAETSTGKTIVHHAVDKMDVELLDFLKTVVNEDTFTELANLSDFHGDTAVDLLCSSTQNEDTNNVRENLYIRLLTSGAVPNKSRA</sequence>
<accession>G5EDE9</accession>
<gene>
    <name evidence="4 7" type="primary">nfki-1</name>
    <name evidence="7" type="synonym">nbid-1</name>
    <name evidence="7" type="ORF">C33A11.1</name>
</gene>
<keyword id="KW-0040">ANK repeat</keyword>
<keyword id="KW-0175">Coiled coil</keyword>
<keyword id="KW-1185">Reference proteome</keyword>
<keyword id="KW-0677">Repeat</keyword>
<comment type="function">
    <text evidence="3">Acts downstream of the receptor complex composed of ilcr-1 and ilcr-2, which is a signaling complex that modulates neuronal activity and animal behavior in response to sensory neuron input. Mediates signaling of the complex.</text>
</comment>
<comment type="tissue specificity">
    <text evidence="3">Expressed in the nervous system.</text>
</comment>
<comment type="similarity">
    <text evidence="5">Belongs to the iASPP family.</text>
</comment>
<feature type="chain" id="PRO_0000445234" description="ANK repeat-containing protein nipk-1" evidence="5">
    <location>
        <begin position="1"/>
        <end position="611"/>
    </location>
</feature>
<feature type="repeat" description="ANK 1" evidence="1">
    <location>
        <begin position="375"/>
        <end position="405"/>
    </location>
</feature>
<feature type="repeat" description="ANK 2" evidence="1">
    <location>
        <begin position="417"/>
        <end position="446"/>
    </location>
</feature>
<feature type="repeat" description="ANK 3" evidence="1">
    <location>
        <begin position="452"/>
        <end position="482"/>
    </location>
</feature>
<feature type="repeat" description="ANK 4" evidence="1">
    <location>
        <begin position="486"/>
        <end position="527"/>
    </location>
</feature>
<feature type="repeat" description="ANK 5" evidence="1">
    <location>
        <begin position="532"/>
        <end position="561"/>
    </location>
</feature>
<feature type="region of interest" description="Disordered" evidence="2">
    <location>
        <begin position="92"/>
        <end position="167"/>
    </location>
</feature>
<feature type="region of interest" description="Disordered" evidence="2">
    <location>
        <begin position="212"/>
        <end position="255"/>
    </location>
</feature>
<feature type="region of interest" description="Disordered" evidence="2">
    <location>
        <begin position="280"/>
        <end position="333"/>
    </location>
</feature>
<feature type="coiled-coil region" evidence="1">
    <location>
        <begin position="91"/>
        <end position="149"/>
    </location>
</feature>
<feature type="compositionally biased region" description="Basic and acidic residues" evidence="2">
    <location>
        <begin position="97"/>
        <end position="131"/>
    </location>
</feature>
<feature type="compositionally biased region" description="Polar residues" evidence="2">
    <location>
        <begin position="212"/>
        <end position="223"/>
    </location>
</feature>
<feature type="compositionally biased region" description="Polar residues" evidence="2">
    <location>
        <begin position="239"/>
        <end position="255"/>
    </location>
</feature>
<feature type="compositionally biased region" description="Polar residues" evidence="2">
    <location>
        <begin position="315"/>
        <end position="333"/>
    </location>
</feature>
<feature type="mutagenesis site" description="Defective aggregation behavior." evidence="3">
    <location>
        <begin position="179"/>
        <end position="611"/>
    </location>
</feature>
<feature type="mutagenesis site" description="Defective aggregation behavior." evidence="3">
    <original>D</original>
    <variation>G</variation>
    <location>
        <position position="247"/>
    </location>
</feature>
<feature type="mutagenesis site" description="Defective aggregation behavior." evidence="3">
    <location>
        <begin position="286"/>
        <end position="611"/>
    </location>
</feature>
<organism evidence="6">
    <name type="scientific">Caenorhabditis elegans</name>
    <dbReference type="NCBI Taxonomy" id="6239"/>
    <lineage>
        <taxon>Eukaryota</taxon>
        <taxon>Metazoa</taxon>
        <taxon>Ecdysozoa</taxon>
        <taxon>Nematoda</taxon>
        <taxon>Chromadorea</taxon>
        <taxon>Rhabditida</taxon>
        <taxon>Rhabditina</taxon>
        <taxon>Rhabditomorpha</taxon>
        <taxon>Rhabditoidea</taxon>
        <taxon>Rhabditidae</taxon>
        <taxon>Peloderinae</taxon>
        <taxon>Caenorhabditis</taxon>
    </lineage>
</organism>
<dbReference type="EMBL" id="BX284606">
    <property type="protein sequence ID" value="CAB01860.2"/>
    <property type="molecule type" value="Genomic_DNA"/>
</dbReference>
<dbReference type="PIR" id="E89722">
    <property type="entry name" value="E89722"/>
</dbReference>
<dbReference type="PIR" id="T19653">
    <property type="entry name" value="T19653"/>
</dbReference>
<dbReference type="RefSeq" id="NP_510540.1">
    <property type="nucleotide sequence ID" value="NM_078139.5"/>
</dbReference>
<dbReference type="SMR" id="G5EDE9"/>
<dbReference type="FunCoup" id="G5EDE9">
    <property type="interactions" value="1"/>
</dbReference>
<dbReference type="STRING" id="6239.C33A11.1.1"/>
<dbReference type="PaxDb" id="6239-C33A11.1.1"/>
<dbReference type="PeptideAtlas" id="G5EDE9"/>
<dbReference type="EnsemblMetazoa" id="C33A11.1.1">
    <property type="protein sequence ID" value="C33A11.1.1"/>
    <property type="gene ID" value="WBGene00007877"/>
</dbReference>
<dbReference type="GeneID" id="181625"/>
<dbReference type="KEGG" id="cel:CELE_C33A11.1"/>
<dbReference type="AGR" id="WB:WBGene00007877"/>
<dbReference type="CTD" id="181625"/>
<dbReference type="WormBase" id="C33A11.1">
    <property type="protein sequence ID" value="CE24824"/>
    <property type="gene ID" value="WBGene00007877"/>
    <property type="gene designation" value="nfki-1"/>
</dbReference>
<dbReference type="eggNOG" id="KOG0504">
    <property type="taxonomic scope" value="Eukaryota"/>
</dbReference>
<dbReference type="GeneTree" id="ENSGT00940000160551"/>
<dbReference type="HOGENOM" id="CLU_458733_0_0_1"/>
<dbReference type="InParanoid" id="G5EDE9"/>
<dbReference type="OMA" id="HIVILHM"/>
<dbReference type="OrthoDB" id="10254947at2759"/>
<dbReference type="PhylomeDB" id="G5EDE9"/>
<dbReference type="PRO" id="PR:G5EDE9"/>
<dbReference type="Proteomes" id="UP000001940">
    <property type="component" value="Chromosome X"/>
</dbReference>
<dbReference type="Bgee" id="WBGene00007877">
    <property type="expression patterns" value="Expressed in pharyngeal muscle cell (C elegans) and 3 other cell types or tissues"/>
</dbReference>
<dbReference type="GO" id="GO:0045597">
    <property type="term" value="P:positive regulation of cell differentiation"/>
    <property type="evidence" value="ECO:0000318"/>
    <property type="project" value="GO_Central"/>
</dbReference>
<dbReference type="GO" id="GO:0006357">
    <property type="term" value="P:regulation of transcription by RNA polymerase II"/>
    <property type="evidence" value="ECO:0000318"/>
    <property type="project" value="GO_Central"/>
</dbReference>
<dbReference type="Gene3D" id="1.25.40.20">
    <property type="entry name" value="Ankyrin repeat-containing domain"/>
    <property type="match status" value="2"/>
</dbReference>
<dbReference type="InterPro" id="IPR002110">
    <property type="entry name" value="Ankyrin_rpt"/>
</dbReference>
<dbReference type="InterPro" id="IPR036770">
    <property type="entry name" value="Ankyrin_rpt-contain_sf"/>
</dbReference>
<dbReference type="InterPro" id="IPR028320">
    <property type="entry name" value="iASPP"/>
</dbReference>
<dbReference type="PANTHER" id="PTHR24164">
    <property type="entry name" value="RELA-ASSOCIATED INHIBITOR"/>
    <property type="match status" value="1"/>
</dbReference>
<dbReference type="PANTHER" id="PTHR24164:SF4">
    <property type="entry name" value="RELA-ASSOCIATED INHIBITOR"/>
    <property type="match status" value="1"/>
</dbReference>
<dbReference type="Pfam" id="PF12796">
    <property type="entry name" value="Ank_2"/>
    <property type="match status" value="1"/>
</dbReference>
<dbReference type="SMART" id="SM00248">
    <property type="entry name" value="ANK"/>
    <property type="match status" value="6"/>
</dbReference>
<dbReference type="SUPFAM" id="SSF48403">
    <property type="entry name" value="Ankyrin repeat"/>
    <property type="match status" value="1"/>
</dbReference>
<dbReference type="PROSITE" id="PS50297">
    <property type="entry name" value="ANK_REP_REGION"/>
    <property type="match status" value="1"/>
</dbReference>
<dbReference type="PROSITE" id="PS50088">
    <property type="entry name" value="ANK_REPEAT"/>
    <property type="match status" value="2"/>
</dbReference>
<reference evidence="6" key="1">
    <citation type="journal article" date="1998" name="Science">
        <title>Genome sequence of the nematode C. elegans: a platform for investigating biology.</title>
        <authorList>
            <consortium name="The C. elegans sequencing consortium"/>
        </authorList>
    </citation>
    <scope>NUCLEOTIDE SEQUENCE [LARGE SCALE GENOMIC DNA]</scope>
    <source>
        <strain evidence="6">Bristol N2</strain>
    </source>
</reference>
<reference evidence="5" key="2">
    <citation type="journal article" date="2017" name="Nature">
        <title>IL-17 is a neuromodulator of Caenorhabditis elegans sensory responses.</title>
        <authorList>
            <person name="Chen C."/>
            <person name="Itakura E."/>
            <person name="Nelson G.M."/>
            <person name="Sheng M."/>
            <person name="Laurent P."/>
            <person name="Fenk L.A."/>
            <person name="Butcher R.A."/>
            <person name="Hegde R.S."/>
            <person name="de Bono M."/>
        </authorList>
    </citation>
    <scope>FUNCTION</scope>
    <scope>TISSUE SPECIFICITY</scope>
    <scope>MUTAGENESIS OF 179-GLN--ALA-611; ASP-247 AND 286-ARG--ALA-611</scope>
</reference>
<proteinExistence type="evidence at protein level"/>
<name>NFKI1_CAEEL</name>